<reference key="1">
    <citation type="journal article" date="2004" name="Nucleic Acids Res.">
        <title>Thermoadaptation trait revealed by the genome sequence of thermophilic Geobacillus kaustophilus.</title>
        <authorList>
            <person name="Takami H."/>
            <person name="Takaki Y."/>
            <person name="Chee G.-J."/>
            <person name="Nishi S."/>
            <person name="Shimamura S."/>
            <person name="Suzuki H."/>
            <person name="Matsui S."/>
            <person name="Uchiyama I."/>
        </authorList>
    </citation>
    <scope>NUCLEOTIDE SEQUENCE [LARGE SCALE GENOMIC DNA]</scope>
    <source>
        <strain>HTA426</strain>
    </source>
</reference>
<evidence type="ECO:0000255" key="1">
    <source>
        <dbReference type="HAMAP-Rule" id="MF_00637"/>
    </source>
</evidence>
<protein>
    <recommendedName>
        <fullName evidence="1">Anti-sigma F factor</fullName>
        <ecNumber evidence="1">2.7.11.1</ecNumber>
    </recommendedName>
    <alternativeName>
        <fullName evidence="1">Stage II sporulation protein AB</fullName>
    </alternativeName>
</protein>
<organism>
    <name type="scientific">Geobacillus kaustophilus (strain HTA426)</name>
    <dbReference type="NCBI Taxonomy" id="235909"/>
    <lineage>
        <taxon>Bacteria</taxon>
        <taxon>Bacillati</taxon>
        <taxon>Bacillota</taxon>
        <taxon>Bacilli</taxon>
        <taxon>Bacillales</taxon>
        <taxon>Anoxybacillaceae</taxon>
        <taxon>Geobacillus</taxon>
        <taxon>Geobacillus thermoleovorans group</taxon>
    </lineage>
</organism>
<feature type="chain" id="PRO_0000203565" description="Anti-sigma F factor">
    <location>
        <begin position="1"/>
        <end position="146"/>
    </location>
</feature>
<gene>
    <name evidence="1" type="primary">spoIIAB</name>
    <name type="ordered locus">GK2309</name>
</gene>
<keyword id="KW-0067">ATP-binding</keyword>
<keyword id="KW-0418">Kinase</keyword>
<keyword id="KW-0547">Nucleotide-binding</keyword>
<keyword id="KW-1185">Reference proteome</keyword>
<keyword id="KW-0723">Serine/threonine-protein kinase</keyword>
<keyword id="KW-0749">Sporulation</keyword>
<keyword id="KW-0808">Transferase</keyword>
<comment type="function">
    <text evidence="1">Binds to sigma F and blocks its ability to form an RNA polymerase holoenzyme (E-sigma F). Phosphorylates SpoIIAA on a serine residue. This phosphorylation may enable SpoIIAA to act as an anti-anti-sigma factor that counteracts SpoIIAB and thus releases sigma F from inhibition.</text>
</comment>
<comment type="catalytic activity">
    <reaction evidence="1">
        <text>L-seryl-[protein] + ATP = O-phospho-L-seryl-[protein] + ADP + H(+)</text>
        <dbReference type="Rhea" id="RHEA:17989"/>
        <dbReference type="Rhea" id="RHEA-COMP:9863"/>
        <dbReference type="Rhea" id="RHEA-COMP:11604"/>
        <dbReference type="ChEBI" id="CHEBI:15378"/>
        <dbReference type="ChEBI" id="CHEBI:29999"/>
        <dbReference type="ChEBI" id="CHEBI:30616"/>
        <dbReference type="ChEBI" id="CHEBI:83421"/>
        <dbReference type="ChEBI" id="CHEBI:456216"/>
        <dbReference type="EC" id="2.7.11.1"/>
    </reaction>
</comment>
<comment type="catalytic activity">
    <reaction evidence="1">
        <text>L-threonyl-[protein] + ATP = O-phospho-L-threonyl-[protein] + ADP + H(+)</text>
        <dbReference type="Rhea" id="RHEA:46608"/>
        <dbReference type="Rhea" id="RHEA-COMP:11060"/>
        <dbReference type="Rhea" id="RHEA-COMP:11605"/>
        <dbReference type="ChEBI" id="CHEBI:15378"/>
        <dbReference type="ChEBI" id="CHEBI:30013"/>
        <dbReference type="ChEBI" id="CHEBI:30616"/>
        <dbReference type="ChEBI" id="CHEBI:61977"/>
        <dbReference type="ChEBI" id="CHEBI:456216"/>
        <dbReference type="EC" id="2.7.11.1"/>
    </reaction>
</comment>
<comment type="similarity">
    <text evidence="1">Belongs to the anti-sigma-factor family.</text>
</comment>
<proteinExistence type="inferred from homology"/>
<name>SP2AB_GEOKA</name>
<sequence>MRNEMHLQFSARSENESFARVTVAAFVAQLDPTMDELTEIKTVVSEAVTNAIIHGYNNDPNGIVSISVIIEDGVVHLTVRDEGVGIPDIEEARQPLFTTKPELERSGMGFTIMENFMDEVIVESEVNKGTTVYLKKHIAKSKALCN</sequence>
<dbReference type="EC" id="2.7.11.1" evidence="1"/>
<dbReference type="EMBL" id="BA000043">
    <property type="protein sequence ID" value="BAD76594.1"/>
    <property type="molecule type" value="Genomic_DNA"/>
</dbReference>
<dbReference type="RefSeq" id="WP_011231791.1">
    <property type="nucleotide sequence ID" value="NC_006510.1"/>
</dbReference>
<dbReference type="SMR" id="Q5KXJ2"/>
<dbReference type="STRING" id="235909.GK2309"/>
<dbReference type="GeneID" id="32064158"/>
<dbReference type="KEGG" id="gka:GK2309"/>
<dbReference type="eggNOG" id="COG2172">
    <property type="taxonomic scope" value="Bacteria"/>
</dbReference>
<dbReference type="HOGENOM" id="CLU_090336_11_0_9"/>
<dbReference type="Proteomes" id="UP000001172">
    <property type="component" value="Chromosome"/>
</dbReference>
<dbReference type="GO" id="GO:0005524">
    <property type="term" value="F:ATP binding"/>
    <property type="evidence" value="ECO:0007669"/>
    <property type="project" value="UniProtKB-KW"/>
</dbReference>
<dbReference type="GO" id="GO:0106310">
    <property type="term" value="F:protein serine kinase activity"/>
    <property type="evidence" value="ECO:0007669"/>
    <property type="project" value="RHEA"/>
</dbReference>
<dbReference type="GO" id="GO:0004674">
    <property type="term" value="F:protein serine/threonine kinase activity"/>
    <property type="evidence" value="ECO:0007669"/>
    <property type="project" value="UniProtKB-KW"/>
</dbReference>
<dbReference type="GO" id="GO:0016989">
    <property type="term" value="F:sigma factor antagonist activity"/>
    <property type="evidence" value="ECO:0007669"/>
    <property type="project" value="InterPro"/>
</dbReference>
<dbReference type="GO" id="GO:0030436">
    <property type="term" value="P:asexual sporulation"/>
    <property type="evidence" value="ECO:0007669"/>
    <property type="project" value="UniProtKB-UniRule"/>
</dbReference>
<dbReference type="GO" id="GO:0042174">
    <property type="term" value="P:negative regulation of sporulation resulting in formation of a cellular spore"/>
    <property type="evidence" value="ECO:0007669"/>
    <property type="project" value="InterPro"/>
</dbReference>
<dbReference type="GO" id="GO:0030435">
    <property type="term" value="P:sporulation resulting in formation of a cellular spore"/>
    <property type="evidence" value="ECO:0007669"/>
    <property type="project" value="UniProtKB-KW"/>
</dbReference>
<dbReference type="CDD" id="cd16942">
    <property type="entry name" value="HATPase_SpoIIAB-like"/>
    <property type="match status" value="1"/>
</dbReference>
<dbReference type="Gene3D" id="3.30.565.10">
    <property type="entry name" value="Histidine kinase-like ATPase, C-terminal domain"/>
    <property type="match status" value="1"/>
</dbReference>
<dbReference type="HAMAP" id="MF_00637">
    <property type="entry name" value="Anti_sigma_F"/>
    <property type="match status" value="1"/>
</dbReference>
<dbReference type="InterPro" id="IPR050267">
    <property type="entry name" value="Anti-sigma-factor_SerPK"/>
</dbReference>
<dbReference type="InterPro" id="IPR010194">
    <property type="entry name" value="Anti-sigma_F"/>
</dbReference>
<dbReference type="InterPro" id="IPR036890">
    <property type="entry name" value="HATPase_C_sf"/>
</dbReference>
<dbReference type="NCBIfam" id="TIGR01925">
    <property type="entry name" value="spIIAB"/>
    <property type="match status" value="1"/>
</dbReference>
<dbReference type="PANTHER" id="PTHR35526:SF3">
    <property type="entry name" value="ANTI-SIGMA-F FACTOR RSBW"/>
    <property type="match status" value="1"/>
</dbReference>
<dbReference type="PANTHER" id="PTHR35526">
    <property type="entry name" value="ANTI-SIGMA-F FACTOR RSBW-RELATED"/>
    <property type="match status" value="1"/>
</dbReference>
<dbReference type="Pfam" id="PF13581">
    <property type="entry name" value="HATPase_c_2"/>
    <property type="match status" value="1"/>
</dbReference>
<dbReference type="SMART" id="SM00387">
    <property type="entry name" value="HATPase_c"/>
    <property type="match status" value="1"/>
</dbReference>
<dbReference type="SUPFAM" id="SSF55874">
    <property type="entry name" value="ATPase domain of HSP90 chaperone/DNA topoisomerase II/histidine kinase"/>
    <property type="match status" value="1"/>
</dbReference>
<accession>Q5KXJ2</accession>